<reference key="1">
    <citation type="journal article" date="2005" name="Genome Res.">
        <title>Comparative genome sequencing of Drosophila pseudoobscura: chromosomal, gene, and cis-element evolution.</title>
        <authorList>
            <person name="Richards S."/>
            <person name="Liu Y."/>
            <person name="Bettencourt B.R."/>
            <person name="Hradecky P."/>
            <person name="Letovsky S."/>
            <person name="Nielsen R."/>
            <person name="Thornton K."/>
            <person name="Hubisz M.J."/>
            <person name="Chen R."/>
            <person name="Meisel R.P."/>
            <person name="Couronne O."/>
            <person name="Hua S."/>
            <person name="Smith M.A."/>
            <person name="Zhang P."/>
            <person name="Liu J."/>
            <person name="Bussemaker H.J."/>
            <person name="van Batenburg M.F."/>
            <person name="Howells S.L."/>
            <person name="Scherer S.E."/>
            <person name="Sodergren E."/>
            <person name="Matthews B.B."/>
            <person name="Crosby M.A."/>
            <person name="Schroeder A.J."/>
            <person name="Ortiz-Barrientos D."/>
            <person name="Rives C.M."/>
            <person name="Metzker M.L."/>
            <person name="Muzny D.M."/>
            <person name="Scott G."/>
            <person name="Steffen D."/>
            <person name="Wheeler D.A."/>
            <person name="Worley K.C."/>
            <person name="Havlak P."/>
            <person name="Durbin K.J."/>
            <person name="Egan A."/>
            <person name="Gill R."/>
            <person name="Hume J."/>
            <person name="Morgan M.B."/>
            <person name="Miner G."/>
            <person name="Hamilton C."/>
            <person name="Huang Y."/>
            <person name="Waldron L."/>
            <person name="Verduzco D."/>
            <person name="Clerc-Blankenburg K.P."/>
            <person name="Dubchak I."/>
            <person name="Noor M.A.F."/>
            <person name="Anderson W."/>
            <person name="White K.P."/>
            <person name="Clark A.G."/>
            <person name="Schaeffer S.W."/>
            <person name="Gelbart W.M."/>
            <person name="Weinstock G.M."/>
            <person name="Gibbs R.A."/>
        </authorList>
    </citation>
    <scope>NUCLEOTIDE SEQUENCE [LARGE SCALE GENOMIC DNA]</scope>
    <source>
        <strain>MV2-25 / Tucson 14011-0121.94</strain>
    </source>
</reference>
<evidence type="ECO:0000255" key="1">
    <source>
        <dbReference type="HAMAP-Rule" id="MF_03123"/>
    </source>
</evidence>
<evidence type="ECO:0000255" key="2">
    <source>
        <dbReference type="PROSITE-ProRule" id="PRU01266"/>
    </source>
</evidence>
<proteinExistence type="inferred from homology"/>
<gene>
    <name evidence="1" type="primary">Las</name>
    <name type="ORF">GA18753</name>
</gene>
<dbReference type="EC" id="2.8.1.8" evidence="1"/>
<dbReference type="EMBL" id="CH379069">
    <property type="protein sequence ID" value="EAL29861.1"/>
    <property type="molecule type" value="Genomic_DNA"/>
</dbReference>
<dbReference type="RefSeq" id="XP_001354122.1">
    <property type="nucleotide sequence ID" value="XM_001354086.2"/>
</dbReference>
<dbReference type="SMR" id="Q2LYK1"/>
<dbReference type="FunCoup" id="Q2LYK1">
    <property type="interactions" value="1844"/>
</dbReference>
<dbReference type="STRING" id="46245.Q2LYK1"/>
<dbReference type="EnsemblMetazoa" id="FBtr0277155">
    <property type="protein sequence ID" value="FBpp0275593"/>
    <property type="gene ID" value="FBgn0078753"/>
</dbReference>
<dbReference type="GeneID" id="4813963"/>
<dbReference type="KEGG" id="dpo:4813963"/>
<dbReference type="CTD" id="40259"/>
<dbReference type="eggNOG" id="KOG2672">
    <property type="taxonomic scope" value="Eukaryota"/>
</dbReference>
<dbReference type="HOGENOM" id="CLU_033144_2_1_1"/>
<dbReference type="InParanoid" id="Q2LYK1"/>
<dbReference type="OMA" id="PYCDIDF"/>
<dbReference type="PhylomeDB" id="Q2LYK1"/>
<dbReference type="UniPathway" id="UPA00538">
    <property type="reaction ID" value="UER00593"/>
</dbReference>
<dbReference type="ChiTaRS" id="Las">
    <property type="organism name" value="fly"/>
</dbReference>
<dbReference type="Proteomes" id="UP000001819">
    <property type="component" value="Chromosome X"/>
</dbReference>
<dbReference type="Bgee" id="FBgn0078753">
    <property type="expression patterns" value="Expressed in insect adult head and 2 other cell types or tissues"/>
</dbReference>
<dbReference type="GO" id="GO:0005739">
    <property type="term" value="C:mitochondrion"/>
    <property type="evidence" value="ECO:0007669"/>
    <property type="project" value="UniProtKB-SubCell"/>
</dbReference>
<dbReference type="GO" id="GO:0051539">
    <property type="term" value="F:4 iron, 4 sulfur cluster binding"/>
    <property type="evidence" value="ECO:0007669"/>
    <property type="project" value="UniProtKB-UniRule"/>
</dbReference>
<dbReference type="GO" id="GO:0016992">
    <property type="term" value="F:lipoate synthase activity"/>
    <property type="evidence" value="ECO:0007669"/>
    <property type="project" value="UniProtKB-UniRule"/>
</dbReference>
<dbReference type="GO" id="GO:0046872">
    <property type="term" value="F:metal ion binding"/>
    <property type="evidence" value="ECO:0007669"/>
    <property type="project" value="UniProtKB-KW"/>
</dbReference>
<dbReference type="CDD" id="cd01335">
    <property type="entry name" value="Radical_SAM"/>
    <property type="match status" value="1"/>
</dbReference>
<dbReference type="FunFam" id="3.20.20.70:FF:000036">
    <property type="entry name" value="Lipoyl synthase, mitochondrial"/>
    <property type="match status" value="1"/>
</dbReference>
<dbReference type="Gene3D" id="3.20.20.70">
    <property type="entry name" value="Aldolase class I"/>
    <property type="match status" value="1"/>
</dbReference>
<dbReference type="HAMAP" id="MF_00206">
    <property type="entry name" value="Lipoyl_synth"/>
    <property type="match status" value="1"/>
</dbReference>
<dbReference type="InterPro" id="IPR013785">
    <property type="entry name" value="Aldolase_TIM"/>
</dbReference>
<dbReference type="InterPro" id="IPR006638">
    <property type="entry name" value="Elp3/MiaA/NifB-like_rSAM"/>
</dbReference>
<dbReference type="InterPro" id="IPR031691">
    <property type="entry name" value="LIAS_N"/>
</dbReference>
<dbReference type="InterPro" id="IPR003698">
    <property type="entry name" value="Lipoyl_synth"/>
</dbReference>
<dbReference type="InterPro" id="IPR007197">
    <property type="entry name" value="rSAM"/>
</dbReference>
<dbReference type="NCBIfam" id="TIGR00510">
    <property type="entry name" value="lipA"/>
    <property type="match status" value="1"/>
</dbReference>
<dbReference type="NCBIfam" id="NF004019">
    <property type="entry name" value="PRK05481.1"/>
    <property type="match status" value="1"/>
</dbReference>
<dbReference type="NCBIfam" id="NF009544">
    <property type="entry name" value="PRK12928.1"/>
    <property type="match status" value="1"/>
</dbReference>
<dbReference type="PANTHER" id="PTHR10949">
    <property type="entry name" value="LIPOYL SYNTHASE"/>
    <property type="match status" value="1"/>
</dbReference>
<dbReference type="PANTHER" id="PTHR10949:SF0">
    <property type="entry name" value="LIPOYL SYNTHASE, MITOCHONDRIAL"/>
    <property type="match status" value="1"/>
</dbReference>
<dbReference type="Pfam" id="PF16881">
    <property type="entry name" value="LIAS_N"/>
    <property type="match status" value="1"/>
</dbReference>
<dbReference type="Pfam" id="PF04055">
    <property type="entry name" value="Radical_SAM"/>
    <property type="match status" value="1"/>
</dbReference>
<dbReference type="PIRSF" id="PIRSF005963">
    <property type="entry name" value="Lipoyl_synth"/>
    <property type="match status" value="1"/>
</dbReference>
<dbReference type="SFLD" id="SFLDF00271">
    <property type="entry name" value="lipoyl_synthase"/>
    <property type="match status" value="1"/>
</dbReference>
<dbReference type="SFLD" id="SFLDG01058">
    <property type="entry name" value="lipoyl_synthase_like"/>
    <property type="match status" value="1"/>
</dbReference>
<dbReference type="SMART" id="SM00729">
    <property type="entry name" value="Elp3"/>
    <property type="match status" value="1"/>
</dbReference>
<dbReference type="SUPFAM" id="SSF102114">
    <property type="entry name" value="Radical SAM enzymes"/>
    <property type="match status" value="1"/>
</dbReference>
<dbReference type="PROSITE" id="PS51918">
    <property type="entry name" value="RADICAL_SAM"/>
    <property type="match status" value="1"/>
</dbReference>
<keyword id="KW-0004">4Fe-4S</keyword>
<keyword id="KW-0408">Iron</keyword>
<keyword id="KW-0411">Iron-sulfur</keyword>
<keyword id="KW-0479">Metal-binding</keyword>
<keyword id="KW-0496">Mitochondrion</keyword>
<keyword id="KW-1185">Reference proteome</keyword>
<keyword id="KW-0949">S-adenosyl-L-methionine</keyword>
<keyword id="KW-0808">Transferase</keyword>
<feature type="chain" id="PRO_0000398221" description="Lipoyl synthase, mitochondrial">
    <location>
        <begin position="1"/>
        <end position="374"/>
    </location>
</feature>
<feature type="domain" description="Radical SAM core" evidence="2">
    <location>
        <begin position="117"/>
        <end position="336"/>
    </location>
</feature>
<feature type="binding site" evidence="1">
    <location>
        <position position="101"/>
    </location>
    <ligand>
        <name>[4Fe-4S] cluster</name>
        <dbReference type="ChEBI" id="CHEBI:49883"/>
        <label>1</label>
    </ligand>
</feature>
<feature type="binding site" evidence="1">
    <location>
        <position position="106"/>
    </location>
    <ligand>
        <name>[4Fe-4S] cluster</name>
        <dbReference type="ChEBI" id="CHEBI:49883"/>
        <label>1</label>
    </ligand>
</feature>
<feature type="binding site" evidence="1">
    <location>
        <position position="112"/>
    </location>
    <ligand>
        <name>[4Fe-4S] cluster</name>
        <dbReference type="ChEBI" id="CHEBI:49883"/>
        <label>1</label>
    </ligand>
</feature>
<feature type="binding site" evidence="1">
    <location>
        <position position="132"/>
    </location>
    <ligand>
        <name>[4Fe-4S] cluster</name>
        <dbReference type="ChEBI" id="CHEBI:49883"/>
        <label>2</label>
        <note>4Fe-4S-S-AdoMet</note>
    </ligand>
</feature>
<feature type="binding site" evidence="1">
    <location>
        <position position="136"/>
    </location>
    <ligand>
        <name>[4Fe-4S] cluster</name>
        <dbReference type="ChEBI" id="CHEBI:49883"/>
        <label>2</label>
        <note>4Fe-4S-S-AdoMet</note>
    </ligand>
</feature>
<feature type="binding site" evidence="1">
    <location>
        <position position="139"/>
    </location>
    <ligand>
        <name>[4Fe-4S] cluster</name>
        <dbReference type="ChEBI" id="CHEBI:49883"/>
        <label>2</label>
        <note>4Fe-4S-S-AdoMet</note>
    </ligand>
</feature>
<feature type="binding site" evidence="1">
    <location>
        <position position="347"/>
    </location>
    <ligand>
        <name>[4Fe-4S] cluster</name>
        <dbReference type="ChEBI" id="CHEBI:49883"/>
        <label>1</label>
    </ligand>
</feature>
<comment type="function">
    <text evidence="1">Catalyzes the radical-mediated insertion of two sulfur atoms into the C-6 and C-8 positions of the octanoyl moiety bound to the lipoyl domains of lipoate-dependent enzymes, thereby converting the octanoylated domains into lipoylated derivatives.</text>
</comment>
<comment type="catalytic activity">
    <reaction evidence="1">
        <text>[[Fe-S] cluster scaffold protein carrying a second [4Fe-4S](2+) cluster] + N(6)-octanoyl-L-lysyl-[protein] + 2 oxidized [2Fe-2S]-[ferredoxin] + 2 S-adenosyl-L-methionine + 4 H(+) = [[Fe-S] cluster scaffold protein] + N(6)-[(R)-dihydrolipoyl]-L-lysyl-[protein] + 4 Fe(3+) + 2 hydrogen sulfide + 2 5'-deoxyadenosine + 2 L-methionine + 2 reduced [2Fe-2S]-[ferredoxin]</text>
        <dbReference type="Rhea" id="RHEA:16585"/>
        <dbReference type="Rhea" id="RHEA-COMP:9928"/>
        <dbReference type="Rhea" id="RHEA-COMP:10000"/>
        <dbReference type="Rhea" id="RHEA-COMP:10001"/>
        <dbReference type="Rhea" id="RHEA-COMP:10475"/>
        <dbReference type="Rhea" id="RHEA-COMP:14568"/>
        <dbReference type="Rhea" id="RHEA-COMP:14569"/>
        <dbReference type="ChEBI" id="CHEBI:15378"/>
        <dbReference type="ChEBI" id="CHEBI:17319"/>
        <dbReference type="ChEBI" id="CHEBI:29034"/>
        <dbReference type="ChEBI" id="CHEBI:29919"/>
        <dbReference type="ChEBI" id="CHEBI:33722"/>
        <dbReference type="ChEBI" id="CHEBI:33737"/>
        <dbReference type="ChEBI" id="CHEBI:33738"/>
        <dbReference type="ChEBI" id="CHEBI:57844"/>
        <dbReference type="ChEBI" id="CHEBI:59789"/>
        <dbReference type="ChEBI" id="CHEBI:78809"/>
        <dbReference type="ChEBI" id="CHEBI:83100"/>
        <dbReference type="EC" id="2.8.1.8"/>
    </reaction>
</comment>
<comment type="cofactor">
    <cofactor evidence="1">
        <name>[4Fe-4S] cluster</name>
        <dbReference type="ChEBI" id="CHEBI:49883"/>
    </cofactor>
    <text evidence="1">Binds 2 [4Fe-4S] clusters per subunit. One cluster is coordinated with 3 cysteines and an exchangeable S-adenosyl-L-methionine.</text>
</comment>
<comment type="pathway">
    <text evidence="1">Protein modification; protein lipoylation via endogenous pathway; protein N(6)-(lipoyl)lysine from octanoyl-[acyl-carrier-protein]: step 2/2.</text>
</comment>
<comment type="subcellular location">
    <subcellularLocation>
        <location evidence="1">Mitochondrion</location>
    </subcellularLocation>
</comment>
<comment type="miscellaneous">
    <text evidence="1">This protein may be expected to contain an N-terminal transit peptide but none has been predicted.</text>
</comment>
<comment type="similarity">
    <text evidence="1">Belongs to the radical SAM superfamily. Lipoyl synthase family.</text>
</comment>
<sequence length="374" mass="42118">MLTAFRPNSPTAIVVRAASTNAKKLEEIRERLAKGPNFQDFVQNPDNLKSVGENYDGKLRREKGEEQRLRLPPWLKTTIPMGKNYTKIKEQLRELKLSTVCEEARCPNIGECWGGGENGTQTATIMLMGDTCTRGCRFCSVKTARIPPPLDENEPVNTAKAIASWGLDYIVLTSVDRDDLPDGGSKHIAQTVREIKARNSNIFVECLVPDFRGDLDCVETIANCGLDVYAHNIETVEKLTPYVRDRRAHYRQTLRVLTEAKRFNPNLITKSSIMLGLGETDEEIERTMTDLREAGVECLTLGQYMQPTNKHLKVIEYVTPEKFKHWEERGNDLGFLYTASGPLVRSSYKAGEFFISSILANRKANQSKDSAPKN</sequence>
<protein>
    <recommendedName>
        <fullName evidence="1">Lipoyl synthase, mitochondrial</fullName>
        <ecNumber evidence="1">2.8.1.8</ecNumber>
    </recommendedName>
    <alternativeName>
        <fullName evidence="1">Lipoate synthase</fullName>
        <shortName evidence="1">LS</shortName>
        <shortName evidence="1">Lip-syn</shortName>
    </alternativeName>
    <alternativeName>
        <fullName evidence="1">Lipoic acid synthase</fullName>
    </alternativeName>
</protein>
<organism>
    <name type="scientific">Drosophila pseudoobscura pseudoobscura</name>
    <name type="common">Fruit fly</name>
    <dbReference type="NCBI Taxonomy" id="46245"/>
    <lineage>
        <taxon>Eukaryota</taxon>
        <taxon>Metazoa</taxon>
        <taxon>Ecdysozoa</taxon>
        <taxon>Arthropoda</taxon>
        <taxon>Hexapoda</taxon>
        <taxon>Insecta</taxon>
        <taxon>Pterygota</taxon>
        <taxon>Neoptera</taxon>
        <taxon>Endopterygota</taxon>
        <taxon>Diptera</taxon>
        <taxon>Brachycera</taxon>
        <taxon>Muscomorpha</taxon>
        <taxon>Ephydroidea</taxon>
        <taxon>Drosophilidae</taxon>
        <taxon>Drosophila</taxon>
        <taxon>Sophophora</taxon>
    </lineage>
</organism>
<name>LIAS_DROPS</name>
<accession>Q2LYK1</accession>